<sequence length="491" mass="53940">MANYFNTLNLRQQLAQLGKCRFMGRDEFADGASYLQGKKVVIVGCGAQGLNQGLNMRDSGLDIAYALRKEAIAEKRASWRKATENGFKVGTYEELIPQADLVVNLTPDKQHSDVVRSVQPLMKDGAALGYSHGFNIVEVGEQIRKDITVVMVAPKCPGTEVREEYKRGFGVPTLIAVHPENDPKGEGMAIAKAWAAATGGHRAGVLESSFVAEVKSDLMGEQTILCGMLQAGSLLCFDKLVAEGTDPAYAEKLIQFGWETITEALKQGGITLMMDRLSNPAKLRAYALSEQLKEIMTPLFQKHMDDIISGEFSSGMMADWANDDKKLLTWREETGKTAFETAPQFEGKIGEQEYFDKGVLMIAMVKAGVELAFETMVDSGIIEESAYYESLHELPLIANTIARKRLYEMNVVISDTAEYGNYLFSYACVPLLKPFMAELQPGDLGSAIPEGAVDNAQLRDVNDAIRSHAIEQVGKKLRGYMTDMKRIAVAG</sequence>
<protein>
    <recommendedName>
        <fullName evidence="1">Ketol-acid reductoisomerase (NADP(+))</fullName>
        <shortName evidence="1">KARI</shortName>
        <ecNumber evidence="1">1.1.1.86</ecNumber>
    </recommendedName>
    <alternativeName>
        <fullName evidence="1">Acetohydroxy-acid isomeroreductase</fullName>
        <shortName evidence="1">AHIR</shortName>
    </alternativeName>
    <alternativeName>
        <fullName evidence="1">Alpha-keto-beta-hydroxylacyl reductoisomerase</fullName>
    </alternativeName>
    <alternativeName>
        <fullName evidence="1">Ketol-acid reductoisomerase type 2</fullName>
    </alternativeName>
    <alternativeName>
        <fullName evidence="1">Ketol-acid reductoisomerase type II</fullName>
    </alternativeName>
</protein>
<dbReference type="EC" id="1.1.1.86" evidence="1"/>
<dbReference type="EMBL" id="CP001120">
    <property type="protein sequence ID" value="ACF68668.1"/>
    <property type="molecule type" value="Genomic_DNA"/>
</dbReference>
<dbReference type="RefSeq" id="WP_000024932.1">
    <property type="nucleotide sequence ID" value="NC_011083.1"/>
</dbReference>
<dbReference type="SMR" id="B4TB09"/>
<dbReference type="KEGG" id="seh:SeHA_C4240"/>
<dbReference type="HOGENOM" id="CLU_551905_0_0_6"/>
<dbReference type="UniPathway" id="UPA00047">
    <property type="reaction ID" value="UER00056"/>
</dbReference>
<dbReference type="UniPathway" id="UPA00049">
    <property type="reaction ID" value="UER00060"/>
</dbReference>
<dbReference type="Proteomes" id="UP000001866">
    <property type="component" value="Chromosome"/>
</dbReference>
<dbReference type="GO" id="GO:0005829">
    <property type="term" value="C:cytosol"/>
    <property type="evidence" value="ECO:0007669"/>
    <property type="project" value="TreeGrafter"/>
</dbReference>
<dbReference type="GO" id="GO:0004455">
    <property type="term" value="F:ketol-acid reductoisomerase activity"/>
    <property type="evidence" value="ECO:0007669"/>
    <property type="project" value="UniProtKB-UniRule"/>
</dbReference>
<dbReference type="GO" id="GO:0000287">
    <property type="term" value="F:magnesium ion binding"/>
    <property type="evidence" value="ECO:0007669"/>
    <property type="project" value="UniProtKB-UniRule"/>
</dbReference>
<dbReference type="GO" id="GO:0009097">
    <property type="term" value="P:isoleucine biosynthetic process"/>
    <property type="evidence" value="ECO:0007669"/>
    <property type="project" value="UniProtKB-UniRule"/>
</dbReference>
<dbReference type="GO" id="GO:0009099">
    <property type="term" value="P:L-valine biosynthetic process"/>
    <property type="evidence" value="ECO:0007669"/>
    <property type="project" value="UniProtKB-UniRule"/>
</dbReference>
<dbReference type="FunFam" id="1.10.1040.10:FF:000007">
    <property type="entry name" value="Ketol-acid reductoisomerase (NADP(+))"/>
    <property type="match status" value="1"/>
</dbReference>
<dbReference type="FunFam" id="3.40.50.720:FF:000043">
    <property type="entry name" value="Ketol-acid reductoisomerase (NADP(+))"/>
    <property type="match status" value="1"/>
</dbReference>
<dbReference type="Gene3D" id="1.10.1040.10">
    <property type="entry name" value="N-(1-d-carboxylethyl)-l-norvaline Dehydrogenase, domain 2"/>
    <property type="match status" value="1"/>
</dbReference>
<dbReference type="Gene3D" id="3.40.50.720">
    <property type="entry name" value="NAD(P)-binding Rossmann-like Domain"/>
    <property type="match status" value="1"/>
</dbReference>
<dbReference type="HAMAP" id="MF_00435">
    <property type="entry name" value="IlvC"/>
    <property type="match status" value="1"/>
</dbReference>
<dbReference type="InterPro" id="IPR008927">
    <property type="entry name" value="6-PGluconate_DH-like_C_sf"/>
</dbReference>
<dbReference type="InterPro" id="IPR013328">
    <property type="entry name" value="6PGD_dom2"/>
</dbReference>
<dbReference type="InterPro" id="IPR013023">
    <property type="entry name" value="KARI"/>
</dbReference>
<dbReference type="InterPro" id="IPR000506">
    <property type="entry name" value="KARI_C"/>
</dbReference>
<dbReference type="InterPro" id="IPR013116">
    <property type="entry name" value="KARI_N"/>
</dbReference>
<dbReference type="InterPro" id="IPR036291">
    <property type="entry name" value="NAD(P)-bd_dom_sf"/>
</dbReference>
<dbReference type="NCBIfam" id="TIGR00465">
    <property type="entry name" value="ilvC"/>
    <property type="match status" value="1"/>
</dbReference>
<dbReference type="NCBIfam" id="NF003557">
    <property type="entry name" value="PRK05225.1"/>
    <property type="match status" value="1"/>
</dbReference>
<dbReference type="PANTHER" id="PTHR21371">
    <property type="entry name" value="KETOL-ACID REDUCTOISOMERASE, MITOCHONDRIAL"/>
    <property type="match status" value="1"/>
</dbReference>
<dbReference type="PANTHER" id="PTHR21371:SF1">
    <property type="entry name" value="KETOL-ACID REDUCTOISOMERASE, MITOCHONDRIAL"/>
    <property type="match status" value="1"/>
</dbReference>
<dbReference type="Pfam" id="PF01450">
    <property type="entry name" value="KARI_C"/>
    <property type="match status" value="2"/>
</dbReference>
<dbReference type="Pfam" id="PF07991">
    <property type="entry name" value="KARI_N"/>
    <property type="match status" value="1"/>
</dbReference>
<dbReference type="SUPFAM" id="SSF48179">
    <property type="entry name" value="6-phosphogluconate dehydrogenase C-terminal domain-like"/>
    <property type="match status" value="2"/>
</dbReference>
<dbReference type="SUPFAM" id="SSF51735">
    <property type="entry name" value="NAD(P)-binding Rossmann-fold domains"/>
    <property type="match status" value="1"/>
</dbReference>
<dbReference type="PROSITE" id="PS51851">
    <property type="entry name" value="KARI_C"/>
    <property type="match status" value="2"/>
</dbReference>
<dbReference type="PROSITE" id="PS51850">
    <property type="entry name" value="KARI_N"/>
    <property type="match status" value="1"/>
</dbReference>
<name>ILVC_SALHS</name>
<comment type="function">
    <text evidence="1">Involved in the biosynthesis of branched-chain amino acids (BCAA). Catalyzes an alkyl-migration followed by a ketol-acid reduction of (S)-2-acetolactate (S2AL) to yield (R)-2,3-dihydroxy-isovalerate. In the isomerase reaction, S2AL is rearranged via a Mg-dependent methyl migration to produce 3-hydroxy-3-methyl-2-ketobutyrate (HMKB). In the reductase reaction, this 2-ketoacid undergoes a metal-dependent reduction by NADPH to yield (R)-2,3-dihydroxy-isovalerate.</text>
</comment>
<comment type="catalytic activity">
    <reaction evidence="1">
        <text>(2R)-2,3-dihydroxy-3-methylbutanoate + NADP(+) = (2S)-2-acetolactate + NADPH + H(+)</text>
        <dbReference type="Rhea" id="RHEA:22068"/>
        <dbReference type="ChEBI" id="CHEBI:15378"/>
        <dbReference type="ChEBI" id="CHEBI:49072"/>
        <dbReference type="ChEBI" id="CHEBI:57783"/>
        <dbReference type="ChEBI" id="CHEBI:58349"/>
        <dbReference type="ChEBI" id="CHEBI:58476"/>
        <dbReference type="EC" id="1.1.1.86"/>
    </reaction>
</comment>
<comment type="catalytic activity">
    <reaction evidence="1">
        <text>(2R,3R)-2,3-dihydroxy-3-methylpentanoate + NADP(+) = (S)-2-ethyl-2-hydroxy-3-oxobutanoate + NADPH + H(+)</text>
        <dbReference type="Rhea" id="RHEA:13493"/>
        <dbReference type="ChEBI" id="CHEBI:15378"/>
        <dbReference type="ChEBI" id="CHEBI:49256"/>
        <dbReference type="ChEBI" id="CHEBI:49258"/>
        <dbReference type="ChEBI" id="CHEBI:57783"/>
        <dbReference type="ChEBI" id="CHEBI:58349"/>
        <dbReference type="EC" id="1.1.1.86"/>
    </reaction>
</comment>
<comment type="cofactor">
    <cofactor evidence="1">
        <name>Mg(2+)</name>
        <dbReference type="ChEBI" id="CHEBI:18420"/>
    </cofactor>
    <text evidence="1">Binds 2 magnesium ions per subunit.</text>
</comment>
<comment type="pathway">
    <text evidence="1">Amino-acid biosynthesis; L-isoleucine biosynthesis; L-isoleucine from 2-oxobutanoate: step 2/4.</text>
</comment>
<comment type="pathway">
    <text evidence="1">Amino-acid biosynthesis; L-valine biosynthesis; L-valine from pyruvate: step 2/4.</text>
</comment>
<comment type="similarity">
    <text evidence="1">Belongs to the ketol-acid reductoisomerase family.</text>
</comment>
<gene>
    <name evidence="1" type="primary">ilvC</name>
    <name type="ordered locus">SeHA_C4240</name>
</gene>
<feature type="chain" id="PRO_1000190988" description="Ketol-acid reductoisomerase (NADP(+))">
    <location>
        <begin position="1"/>
        <end position="491"/>
    </location>
</feature>
<feature type="domain" description="KARI N-terminal Rossmann" evidence="2">
    <location>
        <begin position="15"/>
        <end position="208"/>
    </location>
</feature>
<feature type="domain" description="KARI C-terminal knotted 1" evidence="3">
    <location>
        <begin position="209"/>
        <end position="344"/>
    </location>
</feature>
<feature type="domain" description="KARI C-terminal knotted 2" evidence="3">
    <location>
        <begin position="345"/>
        <end position="484"/>
    </location>
</feature>
<feature type="active site" evidence="1">
    <location>
        <position position="132"/>
    </location>
</feature>
<feature type="binding site" evidence="1">
    <location>
        <begin position="45"/>
        <end position="48"/>
    </location>
    <ligand>
        <name>NADP(+)</name>
        <dbReference type="ChEBI" id="CHEBI:58349"/>
    </ligand>
</feature>
<feature type="binding site" evidence="1">
    <location>
        <position position="68"/>
    </location>
    <ligand>
        <name>NADP(+)</name>
        <dbReference type="ChEBI" id="CHEBI:58349"/>
    </ligand>
</feature>
<feature type="binding site" evidence="1">
    <location>
        <position position="76"/>
    </location>
    <ligand>
        <name>NADP(+)</name>
        <dbReference type="ChEBI" id="CHEBI:58349"/>
    </ligand>
</feature>
<feature type="binding site" evidence="1">
    <location>
        <position position="78"/>
    </location>
    <ligand>
        <name>NADP(+)</name>
        <dbReference type="ChEBI" id="CHEBI:58349"/>
    </ligand>
</feature>
<feature type="binding site" evidence="1">
    <location>
        <begin position="108"/>
        <end position="110"/>
    </location>
    <ligand>
        <name>NADP(+)</name>
        <dbReference type="ChEBI" id="CHEBI:58349"/>
    </ligand>
</feature>
<feature type="binding site" evidence="1">
    <location>
        <position position="158"/>
    </location>
    <ligand>
        <name>NADP(+)</name>
        <dbReference type="ChEBI" id="CHEBI:58349"/>
    </ligand>
</feature>
<feature type="binding site" evidence="1">
    <location>
        <position position="217"/>
    </location>
    <ligand>
        <name>Mg(2+)</name>
        <dbReference type="ChEBI" id="CHEBI:18420"/>
        <label>1</label>
    </ligand>
</feature>
<feature type="binding site" evidence="1">
    <location>
        <position position="217"/>
    </location>
    <ligand>
        <name>Mg(2+)</name>
        <dbReference type="ChEBI" id="CHEBI:18420"/>
        <label>2</label>
    </ligand>
</feature>
<feature type="binding site" evidence="1">
    <location>
        <position position="221"/>
    </location>
    <ligand>
        <name>Mg(2+)</name>
        <dbReference type="ChEBI" id="CHEBI:18420"/>
        <label>1</label>
    </ligand>
</feature>
<feature type="binding site" evidence="1">
    <location>
        <position position="389"/>
    </location>
    <ligand>
        <name>Mg(2+)</name>
        <dbReference type="ChEBI" id="CHEBI:18420"/>
        <label>2</label>
    </ligand>
</feature>
<feature type="binding site" evidence="1">
    <location>
        <position position="393"/>
    </location>
    <ligand>
        <name>Mg(2+)</name>
        <dbReference type="ChEBI" id="CHEBI:18420"/>
        <label>2</label>
    </ligand>
</feature>
<feature type="binding site" evidence="1">
    <location>
        <position position="414"/>
    </location>
    <ligand>
        <name>substrate</name>
    </ligand>
</feature>
<evidence type="ECO:0000255" key="1">
    <source>
        <dbReference type="HAMAP-Rule" id="MF_00435"/>
    </source>
</evidence>
<evidence type="ECO:0000255" key="2">
    <source>
        <dbReference type="PROSITE-ProRule" id="PRU01197"/>
    </source>
</evidence>
<evidence type="ECO:0000255" key="3">
    <source>
        <dbReference type="PROSITE-ProRule" id="PRU01198"/>
    </source>
</evidence>
<proteinExistence type="inferred from homology"/>
<organism>
    <name type="scientific">Salmonella heidelberg (strain SL476)</name>
    <dbReference type="NCBI Taxonomy" id="454169"/>
    <lineage>
        <taxon>Bacteria</taxon>
        <taxon>Pseudomonadati</taxon>
        <taxon>Pseudomonadota</taxon>
        <taxon>Gammaproteobacteria</taxon>
        <taxon>Enterobacterales</taxon>
        <taxon>Enterobacteriaceae</taxon>
        <taxon>Salmonella</taxon>
    </lineage>
</organism>
<reference key="1">
    <citation type="journal article" date="2011" name="J. Bacteriol.">
        <title>Comparative genomics of 28 Salmonella enterica isolates: evidence for CRISPR-mediated adaptive sublineage evolution.</title>
        <authorList>
            <person name="Fricke W.F."/>
            <person name="Mammel M.K."/>
            <person name="McDermott P.F."/>
            <person name="Tartera C."/>
            <person name="White D.G."/>
            <person name="Leclerc J.E."/>
            <person name="Ravel J."/>
            <person name="Cebula T.A."/>
        </authorList>
    </citation>
    <scope>NUCLEOTIDE SEQUENCE [LARGE SCALE GENOMIC DNA]</scope>
    <source>
        <strain>SL476</strain>
    </source>
</reference>
<keyword id="KW-0028">Amino-acid biosynthesis</keyword>
<keyword id="KW-0100">Branched-chain amino acid biosynthesis</keyword>
<keyword id="KW-0460">Magnesium</keyword>
<keyword id="KW-0479">Metal-binding</keyword>
<keyword id="KW-0521">NADP</keyword>
<keyword id="KW-0560">Oxidoreductase</keyword>
<keyword id="KW-0677">Repeat</keyword>
<accession>B4TB09</accession>